<protein>
    <recommendedName>
        <fullName evidence="1">Carbamoyl phosphate synthase large chain</fullName>
        <ecNumber evidence="1">6.3.4.16</ecNumber>
        <ecNumber evidence="1">6.3.5.5</ecNumber>
    </recommendedName>
    <alternativeName>
        <fullName evidence="1">Carbamoyl phosphate synthetase ammonia chain</fullName>
    </alternativeName>
</protein>
<feature type="chain" id="PRO_1000164703" description="Carbamoyl phosphate synthase large chain">
    <location>
        <begin position="1"/>
        <end position="1072"/>
    </location>
</feature>
<feature type="domain" description="ATP-grasp 1" evidence="1">
    <location>
        <begin position="133"/>
        <end position="327"/>
    </location>
</feature>
<feature type="domain" description="ATP-grasp 2" evidence="1">
    <location>
        <begin position="671"/>
        <end position="861"/>
    </location>
</feature>
<feature type="domain" description="MGS-like" evidence="1">
    <location>
        <begin position="930"/>
        <end position="1072"/>
    </location>
</feature>
<feature type="region of interest" description="Carboxyphosphate synthetic domain" evidence="1">
    <location>
        <begin position="1"/>
        <end position="401"/>
    </location>
</feature>
<feature type="region of interest" description="Oligomerization domain" evidence="1">
    <location>
        <begin position="402"/>
        <end position="546"/>
    </location>
</feature>
<feature type="region of interest" description="Carbamoyl phosphate synthetic domain" evidence="1">
    <location>
        <begin position="547"/>
        <end position="929"/>
    </location>
</feature>
<feature type="region of interest" description="Allosteric domain" evidence="1">
    <location>
        <begin position="930"/>
        <end position="1072"/>
    </location>
</feature>
<feature type="binding site" evidence="1">
    <location>
        <position position="129"/>
    </location>
    <ligand>
        <name>ATP</name>
        <dbReference type="ChEBI" id="CHEBI:30616"/>
        <label>1</label>
    </ligand>
</feature>
<feature type="binding site" evidence="1">
    <location>
        <position position="169"/>
    </location>
    <ligand>
        <name>ATP</name>
        <dbReference type="ChEBI" id="CHEBI:30616"/>
        <label>1</label>
    </ligand>
</feature>
<feature type="binding site" evidence="1">
    <location>
        <position position="175"/>
    </location>
    <ligand>
        <name>ATP</name>
        <dbReference type="ChEBI" id="CHEBI:30616"/>
        <label>1</label>
    </ligand>
</feature>
<feature type="binding site" evidence="1">
    <location>
        <position position="176"/>
    </location>
    <ligand>
        <name>ATP</name>
        <dbReference type="ChEBI" id="CHEBI:30616"/>
        <label>1</label>
    </ligand>
</feature>
<feature type="binding site" evidence="1">
    <location>
        <position position="208"/>
    </location>
    <ligand>
        <name>ATP</name>
        <dbReference type="ChEBI" id="CHEBI:30616"/>
        <label>1</label>
    </ligand>
</feature>
<feature type="binding site" evidence="1">
    <location>
        <position position="210"/>
    </location>
    <ligand>
        <name>ATP</name>
        <dbReference type="ChEBI" id="CHEBI:30616"/>
        <label>1</label>
    </ligand>
</feature>
<feature type="binding site" evidence="1">
    <location>
        <position position="215"/>
    </location>
    <ligand>
        <name>ATP</name>
        <dbReference type="ChEBI" id="CHEBI:30616"/>
        <label>1</label>
    </ligand>
</feature>
<feature type="binding site" evidence="1">
    <location>
        <position position="241"/>
    </location>
    <ligand>
        <name>ATP</name>
        <dbReference type="ChEBI" id="CHEBI:30616"/>
        <label>1</label>
    </ligand>
</feature>
<feature type="binding site" evidence="1">
    <location>
        <position position="242"/>
    </location>
    <ligand>
        <name>ATP</name>
        <dbReference type="ChEBI" id="CHEBI:30616"/>
        <label>1</label>
    </ligand>
</feature>
<feature type="binding site" evidence="1">
    <location>
        <position position="243"/>
    </location>
    <ligand>
        <name>ATP</name>
        <dbReference type="ChEBI" id="CHEBI:30616"/>
        <label>1</label>
    </ligand>
</feature>
<feature type="binding site" evidence="1">
    <location>
        <position position="284"/>
    </location>
    <ligand>
        <name>ATP</name>
        <dbReference type="ChEBI" id="CHEBI:30616"/>
        <label>1</label>
    </ligand>
</feature>
<feature type="binding site" evidence="1">
    <location>
        <position position="284"/>
    </location>
    <ligand>
        <name>Mg(2+)</name>
        <dbReference type="ChEBI" id="CHEBI:18420"/>
        <label>1</label>
    </ligand>
</feature>
<feature type="binding site" evidence="1">
    <location>
        <position position="284"/>
    </location>
    <ligand>
        <name>Mn(2+)</name>
        <dbReference type="ChEBI" id="CHEBI:29035"/>
        <label>1</label>
    </ligand>
</feature>
<feature type="binding site" evidence="1">
    <location>
        <position position="298"/>
    </location>
    <ligand>
        <name>ATP</name>
        <dbReference type="ChEBI" id="CHEBI:30616"/>
        <label>1</label>
    </ligand>
</feature>
<feature type="binding site" evidence="1">
    <location>
        <position position="298"/>
    </location>
    <ligand>
        <name>Mg(2+)</name>
        <dbReference type="ChEBI" id="CHEBI:18420"/>
        <label>1</label>
    </ligand>
</feature>
<feature type="binding site" evidence="1">
    <location>
        <position position="298"/>
    </location>
    <ligand>
        <name>Mg(2+)</name>
        <dbReference type="ChEBI" id="CHEBI:18420"/>
        <label>2</label>
    </ligand>
</feature>
<feature type="binding site" evidence="1">
    <location>
        <position position="298"/>
    </location>
    <ligand>
        <name>Mn(2+)</name>
        <dbReference type="ChEBI" id="CHEBI:29035"/>
        <label>1</label>
    </ligand>
</feature>
<feature type="binding site" evidence="1">
    <location>
        <position position="298"/>
    </location>
    <ligand>
        <name>Mn(2+)</name>
        <dbReference type="ChEBI" id="CHEBI:29035"/>
        <label>2</label>
    </ligand>
</feature>
<feature type="binding site" evidence="1">
    <location>
        <position position="300"/>
    </location>
    <ligand>
        <name>Mg(2+)</name>
        <dbReference type="ChEBI" id="CHEBI:18420"/>
        <label>2</label>
    </ligand>
</feature>
<feature type="binding site" evidence="1">
    <location>
        <position position="300"/>
    </location>
    <ligand>
        <name>Mn(2+)</name>
        <dbReference type="ChEBI" id="CHEBI:29035"/>
        <label>2</label>
    </ligand>
</feature>
<feature type="binding site" evidence="1">
    <location>
        <position position="707"/>
    </location>
    <ligand>
        <name>ATP</name>
        <dbReference type="ChEBI" id="CHEBI:30616"/>
        <label>2</label>
    </ligand>
</feature>
<feature type="binding site" evidence="1">
    <location>
        <position position="746"/>
    </location>
    <ligand>
        <name>ATP</name>
        <dbReference type="ChEBI" id="CHEBI:30616"/>
        <label>2</label>
    </ligand>
</feature>
<feature type="binding site" evidence="1">
    <location>
        <position position="752"/>
    </location>
    <ligand>
        <name>ATP</name>
        <dbReference type="ChEBI" id="CHEBI:30616"/>
        <label>2</label>
    </ligand>
</feature>
<feature type="binding site" evidence="1">
    <location>
        <position position="777"/>
    </location>
    <ligand>
        <name>ATP</name>
        <dbReference type="ChEBI" id="CHEBI:30616"/>
        <label>2</label>
    </ligand>
</feature>
<feature type="binding site" evidence="1">
    <location>
        <position position="778"/>
    </location>
    <ligand>
        <name>ATP</name>
        <dbReference type="ChEBI" id="CHEBI:30616"/>
        <label>2</label>
    </ligand>
</feature>
<feature type="binding site" evidence="1">
    <location>
        <position position="779"/>
    </location>
    <ligand>
        <name>ATP</name>
        <dbReference type="ChEBI" id="CHEBI:30616"/>
        <label>2</label>
    </ligand>
</feature>
<feature type="binding site" evidence="1">
    <location>
        <position position="780"/>
    </location>
    <ligand>
        <name>ATP</name>
        <dbReference type="ChEBI" id="CHEBI:30616"/>
        <label>2</label>
    </ligand>
</feature>
<feature type="binding site" evidence="1">
    <location>
        <position position="820"/>
    </location>
    <ligand>
        <name>ATP</name>
        <dbReference type="ChEBI" id="CHEBI:30616"/>
        <label>2</label>
    </ligand>
</feature>
<feature type="binding site" evidence="1">
    <location>
        <position position="820"/>
    </location>
    <ligand>
        <name>Mg(2+)</name>
        <dbReference type="ChEBI" id="CHEBI:18420"/>
        <label>3</label>
    </ligand>
</feature>
<feature type="binding site" evidence="1">
    <location>
        <position position="820"/>
    </location>
    <ligand>
        <name>Mn(2+)</name>
        <dbReference type="ChEBI" id="CHEBI:29035"/>
        <label>3</label>
    </ligand>
</feature>
<feature type="binding site" evidence="1">
    <location>
        <position position="832"/>
    </location>
    <ligand>
        <name>ATP</name>
        <dbReference type="ChEBI" id="CHEBI:30616"/>
        <label>2</label>
    </ligand>
</feature>
<feature type="binding site" evidence="1">
    <location>
        <position position="832"/>
    </location>
    <ligand>
        <name>Mg(2+)</name>
        <dbReference type="ChEBI" id="CHEBI:18420"/>
        <label>3</label>
    </ligand>
</feature>
<feature type="binding site" evidence="1">
    <location>
        <position position="832"/>
    </location>
    <ligand>
        <name>Mg(2+)</name>
        <dbReference type="ChEBI" id="CHEBI:18420"/>
        <label>4</label>
    </ligand>
</feature>
<feature type="binding site" evidence="1">
    <location>
        <position position="832"/>
    </location>
    <ligand>
        <name>Mn(2+)</name>
        <dbReference type="ChEBI" id="CHEBI:29035"/>
        <label>3</label>
    </ligand>
</feature>
<feature type="binding site" evidence="1">
    <location>
        <position position="832"/>
    </location>
    <ligand>
        <name>Mn(2+)</name>
        <dbReference type="ChEBI" id="CHEBI:29035"/>
        <label>4</label>
    </ligand>
</feature>
<feature type="binding site" evidence="1">
    <location>
        <position position="834"/>
    </location>
    <ligand>
        <name>Mg(2+)</name>
        <dbReference type="ChEBI" id="CHEBI:18420"/>
        <label>4</label>
    </ligand>
</feature>
<feature type="binding site" evidence="1">
    <location>
        <position position="834"/>
    </location>
    <ligand>
        <name>Mn(2+)</name>
        <dbReference type="ChEBI" id="CHEBI:29035"/>
        <label>4</label>
    </ligand>
</feature>
<organism>
    <name type="scientific">Bacillus anthracis (strain A0248)</name>
    <dbReference type="NCBI Taxonomy" id="592021"/>
    <lineage>
        <taxon>Bacteria</taxon>
        <taxon>Bacillati</taxon>
        <taxon>Bacillota</taxon>
        <taxon>Bacilli</taxon>
        <taxon>Bacillales</taxon>
        <taxon>Bacillaceae</taxon>
        <taxon>Bacillus</taxon>
        <taxon>Bacillus cereus group</taxon>
    </lineage>
</organism>
<keyword id="KW-0028">Amino-acid biosynthesis</keyword>
<keyword id="KW-0055">Arginine biosynthesis</keyword>
<keyword id="KW-0067">ATP-binding</keyword>
<keyword id="KW-0436">Ligase</keyword>
<keyword id="KW-0460">Magnesium</keyword>
<keyword id="KW-0464">Manganese</keyword>
<keyword id="KW-0479">Metal-binding</keyword>
<keyword id="KW-0547">Nucleotide-binding</keyword>
<keyword id="KW-0665">Pyrimidine biosynthesis</keyword>
<keyword id="KW-0677">Repeat</keyword>
<proteinExistence type="inferred from homology"/>
<name>CARB_BACAA</name>
<sequence length="1072" mass="118664">MPKRLDINTILVIGSGPIVIGQAAEFDYSGTQACQSLKEEGYKVILVNSNPATIMTDTATADKVYIEPLTLEFVSRIIRKERPDAILPTLGGQTGLNMAVELAKSGVLEECGVEILGTKLSAIEQAEDRDLFRTLMQELNEPTPPSEIIHNLDEAYGFVNEIGYPVIVRPAFTLGGTGGGICHNEEELIEIVTSGLKHSPVTQCLLEKSIAGCKEIEYEVMRDSNDNAIVVCNMENIDPVGVHTGDSIVVAPSQTLSDREYQMLRNTSLRIIRALGIEGGCNVQLALDPYSFQYYVIEVNPRVSRSSALASKATGYPIAKLAAKIAVGLTLDEIVNPVTQKTYACFEPALDYVVSKIPRWPFDKFESANRTLGTQMKATGEVMSIGRNLEESLLKAVRSLELGIYHLELDHLKELDKETMKKRIIKADDERLFIVAEAIRQGVTKEEINEWCEMDFFFLQKVENIVNMEREVKANVGNMEVLQTAKEMGFSDHYIAAAWNKTEREIYDMRKENNMTPVFKMVDTCAAEFESATPYYYSTYADENELIVTDRKSVVVLGSGPIRIGQGVEFDYATVHSVWAIKEAGYEAIIINNNPETVSTDFSISDKLYFEPLTIEDVMHIIDLEKPEGVIVQFGGQTAINLAAKLEEHGVKILGTSLEDLDRAEDRDKFEAALTKLGIPQPVGKTATTVEQAVAIAEEIGYPVLVRPSYVLGGRAMEIVYRQEELLHYMKNAVKVHADHPVLIDRYMVGKEIEVDAISDGENVFIPGIMEHIERAGVHSGDSIGVYPPQSLSEKLKEQIIEHTIALGKGLNIVGLLNIQFVVFKDQVYVIEVNPRASRTVPFLSKITGVPMANVATKVILGQDLVEQGYGTGYHPEEKEVYVKAPVFSFAKLRSVDTTLGPEMKSTGEVMGKDLTLEKALYKGLVASGINIPTHGSVIITVADKDKEEAMEIAKRFHEIGYNLLATAGTAQSLTEQNIPVQVVNKIDSEDYNLLDIIRQGKAQFVINTLTKGKQPARDGFRIRRESVENGVACLTSLDTTRAILRVLESMTFSAHSMKEITQTKRHEVVHA</sequence>
<accession>C3P656</accession>
<gene>
    <name evidence="1" type="primary">carB</name>
    <name type="ordered locus">BAA_4048</name>
</gene>
<dbReference type="EC" id="6.3.4.16" evidence="1"/>
<dbReference type="EC" id="6.3.5.5" evidence="1"/>
<dbReference type="EMBL" id="CP001598">
    <property type="protein sequence ID" value="ACQ48975.1"/>
    <property type="molecule type" value="Genomic_DNA"/>
</dbReference>
<dbReference type="RefSeq" id="WP_001126118.1">
    <property type="nucleotide sequence ID" value="NC_012659.1"/>
</dbReference>
<dbReference type="SMR" id="C3P656"/>
<dbReference type="GeneID" id="45023715"/>
<dbReference type="KEGG" id="bai:BAA_4048"/>
<dbReference type="HOGENOM" id="CLU_000513_1_0_9"/>
<dbReference type="UniPathway" id="UPA00068">
    <property type="reaction ID" value="UER00171"/>
</dbReference>
<dbReference type="UniPathway" id="UPA00070">
    <property type="reaction ID" value="UER00115"/>
</dbReference>
<dbReference type="GO" id="GO:0005737">
    <property type="term" value="C:cytoplasm"/>
    <property type="evidence" value="ECO:0007669"/>
    <property type="project" value="TreeGrafter"/>
</dbReference>
<dbReference type="GO" id="GO:0005524">
    <property type="term" value="F:ATP binding"/>
    <property type="evidence" value="ECO:0007669"/>
    <property type="project" value="UniProtKB-UniRule"/>
</dbReference>
<dbReference type="GO" id="GO:0004087">
    <property type="term" value="F:carbamoyl-phosphate synthase (ammonia) activity"/>
    <property type="evidence" value="ECO:0007669"/>
    <property type="project" value="RHEA"/>
</dbReference>
<dbReference type="GO" id="GO:0004088">
    <property type="term" value="F:carbamoyl-phosphate synthase (glutamine-hydrolyzing) activity"/>
    <property type="evidence" value="ECO:0007669"/>
    <property type="project" value="UniProtKB-UniRule"/>
</dbReference>
<dbReference type="GO" id="GO:0046872">
    <property type="term" value="F:metal ion binding"/>
    <property type="evidence" value="ECO:0007669"/>
    <property type="project" value="UniProtKB-KW"/>
</dbReference>
<dbReference type="GO" id="GO:0044205">
    <property type="term" value="P:'de novo' UMP biosynthetic process"/>
    <property type="evidence" value="ECO:0007669"/>
    <property type="project" value="UniProtKB-UniRule"/>
</dbReference>
<dbReference type="GO" id="GO:0006541">
    <property type="term" value="P:glutamine metabolic process"/>
    <property type="evidence" value="ECO:0007669"/>
    <property type="project" value="TreeGrafter"/>
</dbReference>
<dbReference type="GO" id="GO:0006526">
    <property type="term" value="P:L-arginine biosynthetic process"/>
    <property type="evidence" value="ECO:0007669"/>
    <property type="project" value="UniProtKB-UniRule"/>
</dbReference>
<dbReference type="CDD" id="cd01424">
    <property type="entry name" value="MGS_CPS_II"/>
    <property type="match status" value="1"/>
</dbReference>
<dbReference type="FunFam" id="1.10.1030.10:FF:000002">
    <property type="entry name" value="Carbamoyl-phosphate synthase large chain"/>
    <property type="match status" value="1"/>
</dbReference>
<dbReference type="FunFam" id="3.30.1490.20:FF:000001">
    <property type="entry name" value="Carbamoyl-phosphate synthase large chain"/>
    <property type="match status" value="1"/>
</dbReference>
<dbReference type="FunFam" id="3.30.470.20:FF:000001">
    <property type="entry name" value="Carbamoyl-phosphate synthase large chain"/>
    <property type="match status" value="1"/>
</dbReference>
<dbReference type="FunFam" id="3.30.470.20:FF:000026">
    <property type="entry name" value="Carbamoyl-phosphate synthase large chain"/>
    <property type="match status" value="1"/>
</dbReference>
<dbReference type="FunFam" id="3.40.50.1380:FF:000011">
    <property type="entry name" value="Carbamoyl-phosphate synthase large chain"/>
    <property type="match status" value="1"/>
</dbReference>
<dbReference type="FunFam" id="3.40.50.20:FF:000001">
    <property type="entry name" value="Carbamoyl-phosphate synthase large chain"/>
    <property type="match status" value="2"/>
</dbReference>
<dbReference type="Gene3D" id="3.40.50.20">
    <property type="match status" value="2"/>
</dbReference>
<dbReference type="Gene3D" id="3.30.1490.20">
    <property type="entry name" value="ATP-grasp fold, A domain"/>
    <property type="match status" value="1"/>
</dbReference>
<dbReference type="Gene3D" id="3.30.470.20">
    <property type="entry name" value="ATP-grasp fold, B domain"/>
    <property type="match status" value="2"/>
</dbReference>
<dbReference type="Gene3D" id="1.10.1030.10">
    <property type="entry name" value="Carbamoyl-phosphate synthetase, large subunit oligomerisation domain"/>
    <property type="match status" value="1"/>
</dbReference>
<dbReference type="Gene3D" id="3.40.50.1380">
    <property type="entry name" value="Methylglyoxal synthase-like domain"/>
    <property type="match status" value="1"/>
</dbReference>
<dbReference type="HAMAP" id="MF_01210_A">
    <property type="entry name" value="CPSase_L_chain_A"/>
    <property type="match status" value="1"/>
</dbReference>
<dbReference type="HAMAP" id="MF_01210_B">
    <property type="entry name" value="CPSase_L_chain_B"/>
    <property type="match status" value="1"/>
</dbReference>
<dbReference type="InterPro" id="IPR011761">
    <property type="entry name" value="ATP-grasp"/>
</dbReference>
<dbReference type="InterPro" id="IPR013815">
    <property type="entry name" value="ATP_grasp_subdomain_1"/>
</dbReference>
<dbReference type="InterPro" id="IPR006275">
    <property type="entry name" value="CarbamoylP_synth_lsu"/>
</dbReference>
<dbReference type="InterPro" id="IPR005480">
    <property type="entry name" value="CarbamoylP_synth_lsu_oligo"/>
</dbReference>
<dbReference type="InterPro" id="IPR036897">
    <property type="entry name" value="CarbamoylP_synth_lsu_oligo_sf"/>
</dbReference>
<dbReference type="InterPro" id="IPR005479">
    <property type="entry name" value="CbamoylP_synth_lsu-like_ATP-bd"/>
</dbReference>
<dbReference type="InterPro" id="IPR005483">
    <property type="entry name" value="CbamoylP_synth_lsu_CPSase_dom"/>
</dbReference>
<dbReference type="InterPro" id="IPR011607">
    <property type="entry name" value="MGS-like_dom"/>
</dbReference>
<dbReference type="InterPro" id="IPR036914">
    <property type="entry name" value="MGS-like_dom_sf"/>
</dbReference>
<dbReference type="InterPro" id="IPR033937">
    <property type="entry name" value="MGS_CPS_CarB"/>
</dbReference>
<dbReference type="InterPro" id="IPR016185">
    <property type="entry name" value="PreATP-grasp_dom_sf"/>
</dbReference>
<dbReference type="NCBIfam" id="TIGR01369">
    <property type="entry name" value="CPSaseII_lrg"/>
    <property type="match status" value="1"/>
</dbReference>
<dbReference type="NCBIfam" id="NF003671">
    <property type="entry name" value="PRK05294.1"/>
    <property type="match status" value="1"/>
</dbReference>
<dbReference type="NCBIfam" id="NF009455">
    <property type="entry name" value="PRK12815.1"/>
    <property type="match status" value="1"/>
</dbReference>
<dbReference type="PANTHER" id="PTHR11405:SF53">
    <property type="entry name" value="CARBAMOYL-PHOSPHATE SYNTHASE [AMMONIA], MITOCHONDRIAL"/>
    <property type="match status" value="1"/>
</dbReference>
<dbReference type="PANTHER" id="PTHR11405">
    <property type="entry name" value="CARBAMOYLTRANSFERASE FAMILY MEMBER"/>
    <property type="match status" value="1"/>
</dbReference>
<dbReference type="Pfam" id="PF02786">
    <property type="entry name" value="CPSase_L_D2"/>
    <property type="match status" value="2"/>
</dbReference>
<dbReference type="Pfam" id="PF02787">
    <property type="entry name" value="CPSase_L_D3"/>
    <property type="match status" value="1"/>
</dbReference>
<dbReference type="Pfam" id="PF02142">
    <property type="entry name" value="MGS"/>
    <property type="match status" value="1"/>
</dbReference>
<dbReference type="PRINTS" id="PR00098">
    <property type="entry name" value="CPSASE"/>
</dbReference>
<dbReference type="SMART" id="SM01096">
    <property type="entry name" value="CPSase_L_D3"/>
    <property type="match status" value="1"/>
</dbReference>
<dbReference type="SMART" id="SM01209">
    <property type="entry name" value="GARS_A"/>
    <property type="match status" value="1"/>
</dbReference>
<dbReference type="SMART" id="SM00851">
    <property type="entry name" value="MGS"/>
    <property type="match status" value="1"/>
</dbReference>
<dbReference type="SUPFAM" id="SSF48108">
    <property type="entry name" value="Carbamoyl phosphate synthetase, large subunit connection domain"/>
    <property type="match status" value="1"/>
</dbReference>
<dbReference type="SUPFAM" id="SSF56059">
    <property type="entry name" value="Glutathione synthetase ATP-binding domain-like"/>
    <property type="match status" value="2"/>
</dbReference>
<dbReference type="SUPFAM" id="SSF52335">
    <property type="entry name" value="Methylglyoxal synthase-like"/>
    <property type="match status" value="1"/>
</dbReference>
<dbReference type="SUPFAM" id="SSF52440">
    <property type="entry name" value="PreATP-grasp domain"/>
    <property type="match status" value="2"/>
</dbReference>
<dbReference type="PROSITE" id="PS50975">
    <property type="entry name" value="ATP_GRASP"/>
    <property type="match status" value="2"/>
</dbReference>
<dbReference type="PROSITE" id="PS00866">
    <property type="entry name" value="CPSASE_1"/>
    <property type="match status" value="2"/>
</dbReference>
<dbReference type="PROSITE" id="PS00867">
    <property type="entry name" value="CPSASE_2"/>
    <property type="match status" value="2"/>
</dbReference>
<dbReference type="PROSITE" id="PS51855">
    <property type="entry name" value="MGS"/>
    <property type="match status" value="1"/>
</dbReference>
<comment type="function">
    <text evidence="1">Large subunit of the glutamine-dependent carbamoyl phosphate synthetase (CPSase). CPSase catalyzes the formation of carbamoyl phosphate from the ammonia moiety of glutamine, carbonate, and phosphate donated by ATP, constituting the first step of 2 biosynthetic pathways, one leading to arginine and/or urea and the other to pyrimidine nucleotides. The large subunit (synthetase) binds the substrates ammonia (free or transferred from glutamine from the small subunit), hydrogencarbonate and ATP and carries out an ATP-coupled ligase reaction, activating hydrogencarbonate by forming carboxy phosphate which reacts with ammonia to form carbamoyl phosphate.</text>
</comment>
<comment type="catalytic activity">
    <reaction evidence="1">
        <text>hydrogencarbonate + L-glutamine + 2 ATP + H2O = carbamoyl phosphate + L-glutamate + 2 ADP + phosphate + 2 H(+)</text>
        <dbReference type="Rhea" id="RHEA:18633"/>
        <dbReference type="ChEBI" id="CHEBI:15377"/>
        <dbReference type="ChEBI" id="CHEBI:15378"/>
        <dbReference type="ChEBI" id="CHEBI:17544"/>
        <dbReference type="ChEBI" id="CHEBI:29985"/>
        <dbReference type="ChEBI" id="CHEBI:30616"/>
        <dbReference type="ChEBI" id="CHEBI:43474"/>
        <dbReference type="ChEBI" id="CHEBI:58228"/>
        <dbReference type="ChEBI" id="CHEBI:58359"/>
        <dbReference type="ChEBI" id="CHEBI:456216"/>
        <dbReference type="EC" id="6.3.5.5"/>
    </reaction>
</comment>
<comment type="catalytic activity">
    <molecule>Carbamoyl phosphate synthase large chain</molecule>
    <reaction evidence="1">
        <text>hydrogencarbonate + NH4(+) + 2 ATP = carbamoyl phosphate + 2 ADP + phosphate + 2 H(+)</text>
        <dbReference type="Rhea" id="RHEA:18029"/>
        <dbReference type="ChEBI" id="CHEBI:15378"/>
        <dbReference type="ChEBI" id="CHEBI:17544"/>
        <dbReference type="ChEBI" id="CHEBI:28938"/>
        <dbReference type="ChEBI" id="CHEBI:30616"/>
        <dbReference type="ChEBI" id="CHEBI:43474"/>
        <dbReference type="ChEBI" id="CHEBI:58228"/>
        <dbReference type="ChEBI" id="CHEBI:456216"/>
        <dbReference type="EC" id="6.3.4.16"/>
    </reaction>
</comment>
<comment type="cofactor">
    <cofactor evidence="1">
        <name>Mg(2+)</name>
        <dbReference type="ChEBI" id="CHEBI:18420"/>
    </cofactor>
    <cofactor evidence="1">
        <name>Mn(2+)</name>
        <dbReference type="ChEBI" id="CHEBI:29035"/>
    </cofactor>
    <text evidence="1">Binds 4 Mg(2+) or Mn(2+) ions per subunit.</text>
</comment>
<comment type="pathway">
    <text evidence="1">Amino-acid biosynthesis; L-arginine biosynthesis; carbamoyl phosphate from bicarbonate: step 1/1.</text>
</comment>
<comment type="pathway">
    <text evidence="1">Pyrimidine metabolism; UMP biosynthesis via de novo pathway; (S)-dihydroorotate from bicarbonate: step 1/3.</text>
</comment>
<comment type="subunit">
    <text evidence="1">Composed of two chains; the small (or glutamine) chain promotes the hydrolysis of glutamine to ammonia, which is used by the large (or ammonia) chain to synthesize carbamoyl phosphate. Tetramer of heterodimers (alpha,beta)4.</text>
</comment>
<comment type="domain">
    <text evidence="1">The large subunit is composed of 2 ATP-grasp domains that are involved in binding the 2 ATP molecules needed for carbamoyl phosphate synthesis. The N-terminal ATP-grasp domain (referred to as the carboxyphosphate synthetic component) catalyzes the ATP-dependent phosphorylation of hydrogencarbonate to carboxyphosphate and the subsequent nucleophilic attack by ammonia to form a carbamate intermediate. The C-terminal ATP-grasp domain (referred to as the carbamoyl phosphate synthetic component) then catalyzes the phosphorylation of carbamate with the second ATP to form the end product carbamoyl phosphate. The reactive and unstable enzyme intermediates are sequentially channeled from one active site to the next through the interior of the protein over a distance of at least 96 A.</text>
</comment>
<comment type="similarity">
    <text evidence="1">Belongs to the CarB family.</text>
</comment>
<evidence type="ECO:0000255" key="1">
    <source>
        <dbReference type="HAMAP-Rule" id="MF_01210"/>
    </source>
</evidence>
<reference key="1">
    <citation type="submission" date="2009-04" db="EMBL/GenBank/DDBJ databases">
        <title>Genome sequence of Bacillus anthracis A0248.</title>
        <authorList>
            <person name="Dodson R.J."/>
            <person name="Munk A.C."/>
            <person name="Bruce D."/>
            <person name="Detter C."/>
            <person name="Tapia R."/>
            <person name="Sutton G."/>
            <person name="Sims D."/>
            <person name="Brettin T."/>
        </authorList>
    </citation>
    <scope>NUCLEOTIDE SEQUENCE [LARGE SCALE GENOMIC DNA]</scope>
    <source>
        <strain>A0248</strain>
    </source>
</reference>